<dbReference type="EC" id="3.6.4.10" evidence="2"/>
<dbReference type="EMBL" id="X54709">
    <property type="protein sequence ID" value="CAA38516.1"/>
    <property type="molecule type" value="Genomic_DNA"/>
</dbReference>
<dbReference type="EMBL" id="CR382124">
    <property type="protein sequence ID" value="CAH00584.1"/>
    <property type="status" value="ALT_FRAME"/>
    <property type="molecule type" value="Genomic_DNA"/>
</dbReference>
<dbReference type="PIR" id="S13122">
    <property type="entry name" value="S13122"/>
</dbReference>
<dbReference type="RefSeq" id="XP_453488.1">
    <property type="nucleotide sequence ID" value="XM_453488.1"/>
</dbReference>
<dbReference type="SMR" id="P22010"/>
<dbReference type="FunCoup" id="P22010">
    <property type="interactions" value="1466"/>
</dbReference>
<dbReference type="STRING" id="284590.P22010"/>
<dbReference type="PaxDb" id="284590-P22010"/>
<dbReference type="KEGG" id="kla:KLLA0_D09559g"/>
<dbReference type="eggNOG" id="KOG0100">
    <property type="taxonomic scope" value="Eukaryota"/>
</dbReference>
<dbReference type="HOGENOM" id="CLU_005965_7_0_1"/>
<dbReference type="InParanoid" id="P22010"/>
<dbReference type="Proteomes" id="UP000000598">
    <property type="component" value="Chromosome D"/>
</dbReference>
<dbReference type="GO" id="GO:0005788">
    <property type="term" value="C:endoplasmic reticulum lumen"/>
    <property type="evidence" value="ECO:0007669"/>
    <property type="project" value="UniProtKB-SubCell"/>
</dbReference>
<dbReference type="GO" id="GO:0005524">
    <property type="term" value="F:ATP binding"/>
    <property type="evidence" value="ECO:0007669"/>
    <property type="project" value="UniProtKB-KW"/>
</dbReference>
<dbReference type="GO" id="GO:0016887">
    <property type="term" value="F:ATP hydrolysis activity"/>
    <property type="evidence" value="ECO:0007669"/>
    <property type="project" value="RHEA"/>
</dbReference>
<dbReference type="GO" id="GO:0140662">
    <property type="term" value="F:ATP-dependent protein folding chaperone"/>
    <property type="evidence" value="ECO:0007669"/>
    <property type="project" value="InterPro"/>
</dbReference>
<dbReference type="CDD" id="cd10241">
    <property type="entry name" value="ASKHA_NBD_HSP70_BiP"/>
    <property type="match status" value="1"/>
</dbReference>
<dbReference type="FunFam" id="2.60.34.10:FF:000002">
    <property type="entry name" value="Heat shock 70 kDa"/>
    <property type="match status" value="1"/>
</dbReference>
<dbReference type="FunFam" id="3.90.640.10:FF:000002">
    <property type="entry name" value="Heat shock 70 kDa"/>
    <property type="match status" value="1"/>
</dbReference>
<dbReference type="FunFam" id="3.30.420.40:FF:000172">
    <property type="entry name" value="Heat shock 70 kDa protein"/>
    <property type="match status" value="1"/>
</dbReference>
<dbReference type="FunFam" id="3.30.30.30:FF:000001">
    <property type="entry name" value="heat shock 70 kDa protein-like"/>
    <property type="match status" value="1"/>
</dbReference>
<dbReference type="FunFam" id="3.30.420.40:FF:000026">
    <property type="entry name" value="Heat shock protein 70"/>
    <property type="match status" value="1"/>
</dbReference>
<dbReference type="Gene3D" id="1.20.1270.10">
    <property type="match status" value="1"/>
</dbReference>
<dbReference type="Gene3D" id="3.30.30.30">
    <property type="match status" value="1"/>
</dbReference>
<dbReference type="Gene3D" id="3.30.420.40">
    <property type="match status" value="2"/>
</dbReference>
<dbReference type="Gene3D" id="3.90.640.10">
    <property type="entry name" value="Actin, Chain A, domain 4"/>
    <property type="match status" value="1"/>
</dbReference>
<dbReference type="Gene3D" id="2.60.34.10">
    <property type="entry name" value="Substrate Binding Domain Of DNAk, Chain A, domain 1"/>
    <property type="match status" value="1"/>
</dbReference>
<dbReference type="InterPro" id="IPR043129">
    <property type="entry name" value="ATPase_NBD"/>
</dbReference>
<dbReference type="InterPro" id="IPR042050">
    <property type="entry name" value="BIP_NBD"/>
</dbReference>
<dbReference type="InterPro" id="IPR018181">
    <property type="entry name" value="Heat_shock_70_CS"/>
</dbReference>
<dbReference type="InterPro" id="IPR029048">
    <property type="entry name" value="HSP70_C_sf"/>
</dbReference>
<dbReference type="InterPro" id="IPR029047">
    <property type="entry name" value="HSP70_peptide-bd_sf"/>
</dbReference>
<dbReference type="InterPro" id="IPR013126">
    <property type="entry name" value="Hsp_70_fam"/>
</dbReference>
<dbReference type="NCBIfam" id="NF001413">
    <property type="entry name" value="PRK00290.1"/>
    <property type="match status" value="1"/>
</dbReference>
<dbReference type="PANTHER" id="PTHR19375">
    <property type="entry name" value="HEAT SHOCK PROTEIN 70KDA"/>
    <property type="match status" value="1"/>
</dbReference>
<dbReference type="Pfam" id="PF00012">
    <property type="entry name" value="HSP70"/>
    <property type="match status" value="1"/>
</dbReference>
<dbReference type="PRINTS" id="PR00301">
    <property type="entry name" value="HEATSHOCK70"/>
</dbReference>
<dbReference type="SUPFAM" id="SSF53067">
    <property type="entry name" value="Actin-like ATPase domain"/>
    <property type="match status" value="2"/>
</dbReference>
<dbReference type="SUPFAM" id="SSF100934">
    <property type="entry name" value="Heat shock protein 70kD (HSP70), C-terminal subdomain"/>
    <property type="match status" value="1"/>
</dbReference>
<dbReference type="SUPFAM" id="SSF100920">
    <property type="entry name" value="Heat shock protein 70kD (HSP70), peptide-binding domain"/>
    <property type="match status" value="1"/>
</dbReference>
<dbReference type="PROSITE" id="PS00297">
    <property type="entry name" value="HSP70_1"/>
    <property type="match status" value="1"/>
</dbReference>
<dbReference type="PROSITE" id="PS00329">
    <property type="entry name" value="HSP70_2"/>
    <property type="match status" value="1"/>
</dbReference>
<dbReference type="PROSITE" id="PS01036">
    <property type="entry name" value="HSP70_3"/>
    <property type="match status" value="1"/>
</dbReference>
<gene>
    <name type="primary">GRP78</name>
    <name type="synonym">BIP</name>
    <name type="ordered locus">KLLA0D09559g</name>
</gene>
<accession>P22010</accession>
<accession>Q6CRF1</accession>
<evidence type="ECO:0000250" key="1"/>
<evidence type="ECO:0000250" key="2">
    <source>
        <dbReference type="UniProtKB" id="P11021"/>
    </source>
</evidence>
<evidence type="ECO:0000250" key="3">
    <source>
        <dbReference type="UniProtKB" id="P16474"/>
    </source>
</evidence>
<evidence type="ECO:0000255" key="4">
    <source>
        <dbReference type="PROSITE-ProRule" id="PRU10138"/>
    </source>
</evidence>
<evidence type="ECO:0000256" key="5">
    <source>
        <dbReference type="SAM" id="MobiDB-lite"/>
    </source>
</evidence>
<evidence type="ECO:0000305" key="6"/>
<name>BIP_KLULA</name>
<reference key="1">
    <citation type="journal article" date="1990" name="Nucleic Acids Res.">
        <title>The sequence of the Kluyveromyces lactis BiP gene.</title>
        <authorList>
            <person name="Lewis M.J."/>
            <person name="Pelham H.R.B."/>
        </authorList>
    </citation>
    <scope>NUCLEOTIDE SEQUENCE [GENOMIC DNA]</scope>
</reference>
<reference key="2">
    <citation type="journal article" date="2004" name="Nature">
        <title>Genome evolution in yeasts.</title>
        <authorList>
            <person name="Dujon B."/>
            <person name="Sherman D."/>
            <person name="Fischer G."/>
            <person name="Durrens P."/>
            <person name="Casaregola S."/>
            <person name="Lafontaine I."/>
            <person name="de Montigny J."/>
            <person name="Marck C."/>
            <person name="Neuveglise C."/>
            <person name="Talla E."/>
            <person name="Goffard N."/>
            <person name="Frangeul L."/>
            <person name="Aigle M."/>
            <person name="Anthouard V."/>
            <person name="Babour A."/>
            <person name="Barbe V."/>
            <person name="Barnay S."/>
            <person name="Blanchin S."/>
            <person name="Beckerich J.-M."/>
            <person name="Beyne E."/>
            <person name="Bleykasten C."/>
            <person name="Boisrame A."/>
            <person name="Boyer J."/>
            <person name="Cattolico L."/>
            <person name="Confanioleri F."/>
            <person name="de Daruvar A."/>
            <person name="Despons L."/>
            <person name="Fabre E."/>
            <person name="Fairhead C."/>
            <person name="Ferry-Dumazet H."/>
            <person name="Groppi A."/>
            <person name="Hantraye F."/>
            <person name="Hennequin C."/>
            <person name="Jauniaux N."/>
            <person name="Joyet P."/>
            <person name="Kachouri R."/>
            <person name="Kerrest A."/>
            <person name="Koszul R."/>
            <person name="Lemaire M."/>
            <person name="Lesur I."/>
            <person name="Ma L."/>
            <person name="Muller H."/>
            <person name="Nicaud J.-M."/>
            <person name="Nikolski M."/>
            <person name="Oztas S."/>
            <person name="Ozier-Kalogeropoulos O."/>
            <person name="Pellenz S."/>
            <person name="Potier S."/>
            <person name="Richard G.-F."/>
            <person name="Straub M.-L."/>
            <person name="Suleau A."/>
            <person name="Swennen D."/>
            <person name="Tekaia F."/>
            <person name="Wesolowski-Louvel M."/>
            <person name="Westhof E."/>
            <person name="Wirth B."/>
            <person name="Zeniou-Meyer M."/>
            <person name="Zivanovic Y."/>
            <person name="Bolotin-Fukuhara M."/>
            <person name="Thierry A."/>
            <person name="Bouchier C."/>
            <person name="Caudron B."/>
            <person name="Scarpelli C."/>
            <person name="Gaillardin C."/>
            <person name="Weissenbach J."/>
            <person name="Wincker P."/>
            <person name="Souciet J.-L."/>
        </authorList>
    </citation>
    <scope>NUCLEOTIDE SEQUENCE [LARGE SCALE GENOMIC DNA]</scope>
    <source>
        <strain>ATCC 8585 / CBS 2359 / DSM 70799 / NBRC 1267 / NRRL Y-1140 / WM37</strain>
    </source>
</reference>
<proteinExistence type="inferred from homology"/>
<feature type="signal peptide" evidence="1">
    <location>
        <begin position="1"/>
        <end position="43"/>
    </location>
</feature>
<feature type="chain" id="PRO_0000013582" description="Endoplasmic reticulum chaperone BiP">
    <location>
        <begin position="44"/>
        <end position="679"/>
    </location>
</feature>
<feature type="region of interest" description="Nucleotide-binding (NBD)" evidence="2">
    <location>
        <begin position="147"/>
        <end position="301"/>
    </location>
</feature>
<feature type="region of interest" description="Substrate-binding (SBD)" evidence="2">
    <location>
        <begin position="421"/>
        <end position="521"/>
    </location>
</feature>
<feature type="region of interest" description="Disordered" evidence="5">
    <location>
        <begin position="652"/>
        <end position="679"/>
    </location>
</feature>
<feature type="short sequence motif" description="Prevents secretion from ER">
    <location>
        <begin position="676"/>
        <end position="679"/>
    </location>
</feature>
<feature type="compositionally biased region" description="Acidic residues" evidence="5">
    <location>
        <begin position="665"/>
        <end position="679"/>
    </location>
</feature>
<feature type="binding site" evidence="2">
    <location>
        <begin position="59"/>
        <end position="62"/>
    </location>
    <ligand>
        <name>ATP</name>
        <dbReference type="ChEBI" id="CHEBI:30616"/>
    </ligand>
</feature>
<feature type="binding site" evidence="2">
    <location>
        <position position="118"/>
    </location>
    <ligand>
        <name>ATP</name>
        <dbReference type="ChEBI" id="CHEBI:30616"/>
    </ligand>
</feature>
<feature type="binding site" evidence="2">
    <location>
        <begin position="248"/>
        <end position="250"/>
    </location>
    <ligand>
        <name>ATP</name>
        <dbReference type="ChEBI" id="CHEBI:30616"/>
    </ligand>
</feature>
<feature type="binding site" evidence="2">
    <location>
        <begin position="314"/>
        <end position="321"/>
    </location>
    <ligand>
        <name>ATP</name>
        <dbReference type="ChEBI" id="CHEBI:30616"/>
    </ligand>
</feature>
<feature type="binding site" evidence="2">
    <location>
        <begin position="385"/>
        <end position="388"/>
    </location>
    <ligand>
        <name>ATP</name>
        <dbReference type="ChEBI" id="CHEBI:30616"/>
    </ligand>
</feature>
<sequence>MFSARKSSVGWLVSSLAVFYVLLAVIMPIALTGSQSSRVVARAAEDHEDYGTVIGIDLGTTYSCVAVMKNGKTEILANEQGNRITPSYVSFTDDERLIGDAAKNQAASNPKNTIFDIKRLIGLQYNDPTVQRDIKHLPYTVVNKGNKPYVEVTVKGEKKEFTPEEVSGMILGKMKQIAEDYLGKKVTHAVVTVPAYFNDAQRQATKDAGAIAGLNILRIVNEPTAAAIAYGLDKTEDEHQIIVYDLGGGTFDVSLLSIENGVFEVQATAGDTHLGGEDFDYKLVRHFAQLFQKKHDLDVTKNDKAMAKLKREAEKAKRSLSSQTSTRIEIDSFFNGIDFSETLTRAKFEELNLALFKKTLKPVEKVLKDSGLQKEDIDDIVLVGGSTRIPKVQQLLEKFFNGKKASKGINPDEAVAYGAAVQAGVLSGEEGVEDIVLLDVNALTLGIETTGGVMTPLIKRNTAIPTKKSQIFSTAVDNQKAVRIQVYEGERAMVKDNNLLGNFELSDIRAAPRGVPQIEVTFALDANGILTVSATDKDTGKSESITIANDKGRLSQDDIDRMVEEAEKYAAEDAKFKAKSEARNTFENFVHYVKNSVNGELAEIMDEDDKETVLDNVNESLEWLEDNSDVAEAEDFEEKMASFKESVEPILAKASASQGSTSGEGFEDEDDDDYFDDEL</sequence>
<keyword id="KW-0067">ATP-binding</keyword>
<keyword id="KW-0143">Chaperone</keyword>
<keyword id="KW-0256">Endoplasmic reticulum</keyword>
<keyword id="KW-0378">Hydrolase</keyword>
<keyword id="KW-0547">Nucleotide-binding</keyword>
<keyword id="KW-1185">Reference proteome</keyword>
<keyword id="KW-0732">Signal</keyword>
<keyword id="KW-0346">Stress response</keyword>
<organism>
    <name type="scientific">Kluyveromyces lactis (strain ATCC 8585 / CBS 2359 / DSM 70799 / NBRC 1267 / NRRL Y-1140 / WM37)</name>
    <name type="common">Yeast</name>
    <name type="synonym">Candida sphaerica</name>
    <dbReference type="NCBI Taxonomy" id="284590"/>
    <lineage>
        <taxon>Eukaryota</taxon>
        <taxon>Fungi</taxon>
        <taxon>Dikarya</taxon>
        <taxon>Ascomycota</taxon>
        <taxon>Saccharomycotina</taxon>
        <taxon>Saccharomycetes</taxon>
        <taxon>Saccharomycetales</taxon>
        <taxon>Saccharomycetaceae</taxon>
        <taxon>Kluyveromyces</taxon>
    </lineage>
</organism>
<comment type="function">
    <text evidence="3">Probably plays a role in facilitating the assembly of multimeric protein complexes inside the ER. Is required for secretory polypeptide translocation. May physically associate with SEC63 protein in the endoplasmic reticulum and this interaction may be regulated by ATP hydrolysis.</text>
</comment>
<comment type="catalytic activity">
    <reaction evidence="2">
        <text>ATP + H2O = ADP + phosphate + H(+)</text>
        <dbReference type="Rhea" id="RHEA:13065"/>
        <dbReference type="ChEBI" id="CHEBI:15377"/>
        <dbReference type="ChEBI" id="CHEBI:15378"/>
        <dbReference type="ChEBI" id="CHEBI:30616"/>
        <dbReference type="ChEBI" id="CHEBI:43474"/>
        <dbReference type="ChEBI" id="CHEBI:456216"/>
        <dbReference type="EC" id="3.6.4.10"/>
    </reaction>
</comment>
<comment type="activity regulation">
    <text evidence="2">The chaperone activity is regulated by ATP-induced allosteric coupling of the nucleotide-binding (NBD) and substrate-binding (SBD) domains. In the ADP-bound and nucleotide-free (apo) states, the two domains have little interaction. In contrast, in the ATP-bound state the two domains are tightly coupled, which results in drastically accelerated kinetics in both binding and release of polypeptide substrates. J domain-containing co-chaperones stimulate the ATPase activity and are required for efficient substrate recognition.</text>
</comment>
<comment type="subcellular location">
    <subcellularLocation>
        <location evidence="3 4">Endoplasmic reticulum lumen</location>
    </subcellularLocation>
</comment>
<comment type="similarity">
    <text evidence="6">Belongs to the heat shock protein 70 family.</text>
</comment>
<comment type="sequence caution" evidence="6">
    <conflict type="frameshift">
        <sequence resource="EMBL-CDS" id="CAH00584"/>
    </conflict>
</comment>
<protein>
    <recommendedName>
        <fullName evidence="6">Endoplasmic reticulum chaperone BiP</fullName>
        <ecNumber evidence="2">3.6.4.10</ecNumber>
    </recommendedName>
    <alternativeName>
        <fullName evidence="6">Immunoglobulin heavy chain-binding protein homolog</fullName>
        <shortName evidence="6">BiP</shortName>
    </alternativeName>
</protein>